<dbReference type="EMBL" id="AP009373">
    <property type="protein sequence ID" value="BAF50434.1"/>
    <property type="molecule type" value="Genomic_DNA"/>
</dbReference>
<dbReference type="EMBL" id="AP009373">
    <property type="protein sequence ID" value="BAF50422.1"/>
    <property type="molecule type" value="Genomic_DNA"/>
</dbReference>
<dbReference type="GO" id="GO:0009706">
    <property type="term" value="C:chloroplast inner membrane"/>
    <property type="evidence" value="ECO:0007669"/>
    <property type="project" value="UniProtKB-SubCell"/>
</dbReference>
<dbReference type="GO" id="GO:0015031">
    <property type="term" value="P:protein transport"/>
    <property type="evidence" value="ECO:0007669"/>
    <property type="project" value="UniProtKB-KW"/>
</dbReference>
<dbReference type="InterPro" id="IPR008896">
    <property type="entry name" value="TIC214"/>
</dbReference>
<dbReference type="PANTHER" id="PTHR33163:SF40">
    <property type="entry name" value="PROTEIN TIC 214"/>
    <property type="match status" value="1"/>
</dbReference>
<dbReference type="PANTHER" id="PTHR33163">
    <property type="entry name" value="PROTEIN TIC 214-RELATED"/>
    <property type="match status" value="1"/>
</dbReference>
<dbReference type="Pfam" id="PF05758">
    <property type="entry name" value="Ycf1"/>
    <property type="match status" value="1"/>
</dbReference>
<feature type="chain" id="PRO_0000326574" description="Protein TIC 214">
    <location>
        <begin position="1"/>
        <end position="1780"/>
    </location>
</feature>
<feature type="transmembrane region" description="Helical" evidence="2">
    <location>
        <begin position="19"/>
        <end position="39"/>
    </location>
</feature>
<feature type="transmembrane region" description="Helical" evidence="2">
    <location>
        <begin position="68"/>
        <end position="88"/>
    </location>
</feature>
<feature type="transmembrane region" description="Helical" evidence="2">
    <location>
        <begin position="91"/>
        <end position="111"/>
    </location>
</feature>
<feature type="transmembrane region" description="Helical" evidence="2">
    <location>
        <begin position="133"/>
        <end position="153"/>
    </location>
</feature>
<feature type="transmembrane region" description="Helical" evidence="2">
    <location>
        <begin position="176"/>
        <end position="196"/>
    </location>
</feature>
<feature type="transmembrane region" description="Helical" evidence="2">
    <location>
        <begin position="227"/>
        <end position="247"/>
    </location>
</feature>
<feature type="region of interest" description="Disordered" evidence="3">
    <location>
        <begin position="251"/>
        <end position="275"/>
    </location>
</feature>
<feature type="compositionally biased region" description="Basic and acidic residues" evidence="3">
    <location>
        <begin position="254"/>
        <end position="268"/>
    </location>
</feature>
<protein>
    <recommendedName>
        <fullName evidence="1">Protein TIC 214</fullName>
    </recommendedName>
    <alternativeName>
        <fullName evidence="1">Translocon at the inner envelope membrane of chloroplasts 214</fullName>
        <shortName evidence="1">AtTIC214</shortName>
    </alternativeName>
</protein>
<evidence type="ECO:0000250" key="1">
    <source>
        <dbReference type="UniProtKB" id="P56785"/>
    </source>
</evidence>
<evidence type="ECO:0000255" key="2"/>
<evidence type="ECO:0000256" key="3">
    <source>
        <dbReference type="SAM" id="MobiDB-lite"/>
    </source>
</evidence>
<evidence type="ECO:0000305" key="4"/>
<keyword id="KW-0150">Chloroplast</keyword>
<keyword id="KW-0472">Membrane</keyword>
<keyword id="KW-0934">Plastid</keyword>
<keyword id="KW-1001">Plastid inner membrane</keyword>
<keyword id="KW-0653">Protein transport</keyword>
<keyword id="KW-0812">Transmembrane</keyword>
<keyword id="KW-1133">Transmembrane helix</keyword>
<keyword id="KW-0813">Transport</keyword>
<sequence length="1780" mass="212801">MMVFQSFILGNLVSLCMKIINSVVVVGLYYGFLTTFSIGPSYLFLLRARVMDEGEEGTEKKVSATTGFIAGQLMMFISIYYAPLHLALGRPHTITVLALPYLLFHFFWNNNKHFFDYGSTTRNEMRNLRIQCVFLNNLIFQLFNHFILPSSMLARLVNIYMFRCNNKMLFVTSSFVGWLIGHILFMKWVGLVLVWIQQNNSIRSNVLIRSNKYKFLVSELRNSMARIFSILLFITCVYYLGRTPSPIFTKKLKGTSETEERGGTKQDQEVSTEEAPFPSLFSEEREDLDKIDEMEEIRVNGKDKINKDDEFHVRTYYKKVSENRDGNKENSNLKFFKIKKKEDHFLWFEKPFVTLVFDYKRWNRPNRYIKNEKIENTIRNEMSQYFFYTCKSDGKERISFTYPPNLSTFFEMIQKKIPSFTREKAPADQMSAYWSLMNEEKKNNLKNVFFNRIEALDKKRSFENILEKTTRFCHNETKKEYLPKLYDPFLHGISRGKVKKLLPFQIITETYINIGLGGSWINKIHGILLKINSKKFEQTLEKFNRKSLSVEKKLSFFSEPREEKSHSDEEIQIFKILFDVVITDNNNQTLIKNVIYFHEINKSVPQWSYKLTSELEELEGENEENVPTEPGIRSRKAKPVVVFTDKESHNGIYTNLKDNQNFDQKDEMALIRYSQHSDFRRDLIKGSMRSQRRKTVIWEFFQAKVHSPLFFDRIDKLFFFSFDLWGLKKTILRNLMWKKKKKKIDKNEEEQLKRKERRRMEIAETWDSFLFSQTIRGFLLVTQSILRKYLILPLLIIIKNSTRALLFQVPEWSEDLKDWKREMHIKCTYNGVQLSETEFPRNWLTDGIQIKIIFPFYLKPWHKSKVQSSQKARLKKTKDKGEKNDFGFLTVWGMETELPFGSAKKKPSFFEPIFKELKKRIKKFKRKPFWVLSIFKERATILLKVAKEIKNWILQNLLFLKGKIKNISKQNRMPLFDLREISELNETKKDSIMSNQMIYGLSVQKKSMEWTNSSLSENKIKNLIDRIKTIKNQTEEILKEKENLTNTNRCNKPRYDSKIIESSKKSWQTFKRKNIRLIRKFFFFFKFCIEQLFRTIFLGIINIPRITTQLFFESTKEILDKSIYIYKNEENGEKNKNKKNTIFFISTIKNLISKKKIFSYDLCSLSQAYVFYKLSQIQVSNFSKLKAVLEYNICITSFFIKNQLKDLVQEQGILDYELKDKTFLNSQVNQWKHWLRSNSQYNLPQVAWARLVTQRWKKKINQDSLVLNQSLIKTDSYEKNKFDKFDNYKKQNFFEANSLLNPKLNLKKDYRYNLFCYKFIHSREKMFDMSIGIALDNCLVSSFLEKYNIRVIEEIGHRKYLDWRILNFLFIKKVNMRPWVDTKSKKKDSRTKVQNYQKIDKITKTDLANKKSFFFDWMGMNEEILNRRLTNFEFFFFPEFVLFSSTYKTKPWVIPIKLLLFNFNEKKNVNKKITLKNKGFISSNEKGSLWFYNLNKEENGLAGQGELESDNEKQRNPESVLLNQEKNIDENYAESKIKKRQNKKQYKSNTEAELELFLTRYSRFQLRWNCFLNQKIINNIKVYCLLVRLKNPNEITISCIERGELSLDILMIEKNFTFTKLMKKGMLIVEPVRLSVKNDGQLIIYRTIGISLVHKNKPKISKRYKNIDKKNNYDCFIPENILSPKRRREFRILICFNLKKKNARDRNSRFDKNIKNLTTVLHKKKDLDKDKKTLIKLKSFLWPNFRLEDLACMNRYWFNTTNGNRFSMIRIHMYTRFKIH</sequence>
<accession>A4QL79</accession>
<accession>A4QL67</accession>
<proteinExistence type="inferred from homology"/>
<reference key="1">
    <citation type="submission" date="2007-03" db="EMBL/GenBank/DDBJ databases">
        <title>Sequencing analysis of Draba nemoroza chloroplast DNA.</title>
        <authorList>
            <person name="Hosouchi T."/>
            <person name="Tsuruoka H."/>
            <person name="Kotani H."/>
        </authorList>
    </citation>
    <scope>NUCLEOTIDE SEQUENCE [LARGE SCALE GENOMIC DNA]</scope>
</reference>
<organism>
    <name type="scientific">Draba nemorosa</name>
    <name type="common">Woodland whitlowgrass</name>
    <dbReference type="NCBI Taxonomy" id="171822"/>
    <lineage>
        <taxon>Eukaryota</taxon>
        <taxon>Viridiplantae</taxon>
        <taxon>Streptophyta</taxon>
        <taxon>Embryophyta</taxon>
        <taxon>Tracheophyta</taxon>
        <taxon>Spermatophyta</taxon>
        <taxon>Magnoliopsida</taxon>
        <taxon>eudicotyledons</taxon>
        <taxon>Gunneridae</taxon>
        <taxon>Pentapetalae</taxon>
        <taxon>rosids</taxon>
        <taxon>malvids</taxon>
        <taxon>Brassicales</taxon>
        <taxon>Brassicaceae</taxon>
        <taxon>Arabideae</taxon>
        <taxon>Draba</taxon>
    </lineage>
</organism>
<geneLocation type="chloroplast"/>
<comment type="function">
    <text evidence="1">Involved in protein precursor import into chloroplasts. May be part of an intermediate translocation complex acting as a protein-conducting channel at the inner envelope.</text>
</comment>
<comment type="subunit">
    <text evidence="1">Part of the Tic complex.</text>
</comment>
<comment type="subcellular location">
    <subcellularLocation>
        <location evidence="1">Plastid</location>
        <location evidence="1">Chloroplast inner membrane</location>
        <topology evidence="2">Multi-pass membrane protein</topology>
    </subcellularLocation>
</comment>
<comment type="miscellaneous">
    <text>There is a partial copy of the N-terminus (positions 1-344) of ycf1 in the inverted repeat (BAF50422).</text>
</comment>
<comment type="similarity">
    <text evidence="4">Belongs to the TIC214 family.</text>
</comment>
<name>TI214_DRANE</name>
<gene>
    <name evidence="1" type="primary">TIC214</name>
    <name type="synonym">ycf1-A</name>
</gene>
<gene>
    <name evidence="1" type="primary">TIC214</name>
    <name type="synonym">ycf1-B</name>
</gene>